<feature type="chain" id="PRO_0000331062" description="SsrA-binding protein">
    <location>
        <begin position="1"/>
        <end position="160"/>
    </location>
</feature>
<comment type="function">
    <text evidence="1">Required for rescue of stalled ribosomes mediated by trans-translation. Binds to transfer-messenger RNA (tmRNA), required for stable association of tmRNA with ribosomes. tmRNA and SmpB together mimic tRNA shape, replacing the anticodon stem-loop with SmpB. tmRNA is encoded by the ssrA gene; the 2 termini fold to resemble tRNA(Ala) and it encodes a 'tag peptide', a short internal open reading frame. During trans-translation Ala-aminoacylated tmRNA acts like a tRNA, entering the A-site of stalled ribosomes, displacing the stalled mRNA. The ribosome then switches to translate the ORF on the tmRNA; the nascent peptide is terminated with the 'tag peptide' encoded by the tmRNA and targeted for degradation. The ribosome is freed to recommence translation, which seems to be the essential function of trans-translation.</text>
</comment>
<comment type="subcellular location">
    <subcellularLocation>
        <location evidence="1">Cytoplasm</location>
    </subcellularLocation>
    <text evidence="1">The tmRNA-SmpB complex associates with stalled 70S ribosomes.</text>
</comment>
<comment type="similarity">
    <text evidence="1">Belongs to the SmpB family.</text>
</comment>
<gene>
    <name evidence="1" type="primary">smpB</name>
    <name type="ordered locus">Maqu_3370</name>
</gene>
<dbReference type="EMBL" id="CP000514">
    <property type="protein sequence ID" value="ABM20441.1"/>
    <property type="molecule type" value="Genomic_DNA"/>
</dbReference>
<dbReference type="RefSeq" id="WP_011786782.1">
    <property type="nucleotide sequence ID" value="NC_008740.1"/>
</dbReference>
<dbReference type="SMR" id="A1U622"/>
<dbReference type="STRING" id="351348.Maqu_3370"/>
<dbReference type="GeneID" id="31822576"/>
<dbReference type="KEGG" id="maq:Maqu_3370"/>
<dbReference type="eggNOG" id="COG0691">
    <property type="taxonomic scope" value="Bacteria"/>
</dbReference>
<dbReference type="HOGENOM" id="CLU_108953_3_0_6"/>
<dbReference type="OrthoDB" id="9805462at2"/>
<dbReference type="Proteomes" id="UP000000998">
    <property type="component" value="Chromosome"/>
</dbReference>
<dbReference type="GO" id="GO:0005829">
    <property type="term" value="C:cytosol"/>
    <property type="evidence" value="ECO:0007669"/>
    <property type="project" value="TreeGrafter"/>
</dbReference>
<dbReference type="GO" id="GO:0003723">
    <property type="term" value="F:RNA binding"/>
    <property type="evidence" value="ECO:0007669"/>
    <property type="project" value="UniProtKB-UniRule"/>
</dbReference>
<dbReference type="GO" id="GO:0070929">
    <property type="term" value="P:trans-translation"/>
    <property type="evidence" value="ECO:0007669"/>
    <property type="project" value="UniProtKB-UniRule"/>
</dbReference>
<dbReference type="CDD" id="cd09294">
    <property type="entry name" value="SmpB"/>
    <property type="match status" value="1"/>
</dbReference>
<dbReference type="Gene3D" id="2.40.280.10">
    <property type="match status" value="1"/>
</dbReference>
<dbReference type="HAMAP" id="MF_00023">
    <property type="entry name" value="SmpB"/>
    <property type="match status" value="1"/>
</dbReference>
<dbReference type="InterPro" id="IPR023620">
    <property type="entry name" value="SmpB"/>
</dbReference>
<dbReference type="InterPro" id="IPR000037">
    <property type="entry name" value="SsrA-bd_prot"/>
</dbReference>
<dbReference type="InterPro" id="IPR020081">
    <property type="entry name" value="SsrA-bd_prot_CS"/>
</dbReference>
<dbReference type="NCBIfam" id="NF003843">
    <property type="entry name" value="PRK05422.1"/>
    <property type="match status" value="1"/>
</dbReference>
<dbReference type="NCBIfam" id="TIGR00086">
    <property type="entry name" value="smpB"/>
    <property type="match status" value="1"/>
</dbReference>
<dbReference type="PANTHER" id="PTHR30308:SF2">
    <property type="entry name" value="SSRA-BINDING PROTEIN"/>
    <property type="match status" value="1"/>
</dbReference>
<dbReference type="PANTHER" id="PTHR30308">
    <property type="entry name" value="TMRNA-BINDING COMPONENT OF TRANS-TRANSLATION TAGGING COMPLEX"/>
    <property type="match status" value="1"/>
</dbReference>
<dbReference type="Pfam" id="PF01668">
    <property type="entry name" value="SmpB"/>
    <property type="match status" value="1"/>
</dbReference>
<dbReference type="SUPFAM" id="SSF74982">
    <property type="entry name" value="Small protein B (SmpB)"/>
    <property type="match status" value="1"/>
</dbReference>
<dbReference type="PROSITE" id="PS01317">
    <property type="entry name" value="SSRP"/>
    <property type="match status" value="1"/>
</dbReference>
<proteinExistence type="inferred from homology"/>
<sequence length="160" mass="18129">MSKKKANAPTSNTIALNKKAKHEYHIEERFEAGLALLGWEVKSLRAGKAQLVDAYVLLKDGEAWLLGSHITPLNTASTHVIADPTRTRKLLLHAKEIAKIVGQVNQAGYTCIPLALYWKKNKVKCEIALVKGKKLFDKRATEKERDWNRQKQRIMREANT</sequence>
<evidence type="ECO:0000255" key="1">
    <source>
        <dbReference type="HAMAP-Rule" id="MF_00023"/>
    </source>
</evidence>
<organism>
    <name type="scientific">Marinobacter nauticus (strain ATCC 700491 / DSM 11845 / VT8)</name>
    <name type="common">Marinobacter aquaeolei</name>
    <dbReference type="NCBI Taxonomy" id="351348"/>
    <lineage>
        <taxon>Bacteria</taxon>
        <taxon>Pseudomonadati</taxon>
        <taxon>Pseudomonadota</taxon>
        <taxon>Gammaproteobacteria</taxon>
        <taxon>Pseudomonadales</taxon>
        <taxon>Marinobacteraceae</taxon>
        <taxon>Marinobacter</taxon>
    </lineage>
</organism>
<keyword id="KW-0963">Cytoplasm</keyword>
<keyword id="KW-0694">RNA-binding</keyword>
<reference key="1">
    <citation type="journal article" date="2011" name="Appl. Environ. Microbiol.">
        <title>Genomic potential of Marinobacter aquaeolei, a biogeochemical 'opportunitroph'.</title>
        <authorList>
            <person name="Singer E."/>
            <person name="Webb E.A."/>
            <person name="Nelson W.C."/>
            <person name="Heidelberg J.F."/>
            <person name="Ivanova N."/>
            <person name="Pati A."/>
            <person name="Edwards K.J."/>
        </authorList>
    </citation>
    <scope>NUCLEOTIDE SEQUENCE [LARGE SCALE GENOMIC DNA]</scope>
    <source>
        <strain>ATCC 700491 / DSM 11845 / VT8</strain>
    </source>
</reference>
<name>SSRP_MARN8</name>
<protein>
    <recommendedName>
        <fullName evidence="1">SsrA-binding protein</fullName>
    </recommendedName>
    <alternativeName>
        <fullName evidence="1">Small protein B</fullName>
    </alternativeName>
</protein>
<accession>A1U622</accession>